<evidence type="ECO:0000255" key="1">
    <source>
        <dbReference type="HAMAP-Rule" id="MF_01897"/>
    </source>
</evidence>
<evidence type="ECO:0000255" key="2">
    <source>
        <dbReference type="PROSITE-ProRule" id="PRU01384"/>
    </source>
</evidence>
<reference key="1">
    <citation type="journal article" date="2001" name="Science">
        <title>Complete genome sequence of a virulent isolate of Streptococcus pneumoniae.</title>
        <authorList>
            <person name="Tettelin H."/>
            <person name="Nelson K.E."/>
            <person name="Paulsen I.T."/>
            <person name="Eisen J.A."/>
            <person name="Read T.D."/>
            <person name="Peterson S.N."/>
            <person name="Heidelberg J.F."/>
            <person name="DeBoy R.T."/>
            <person name="Haft D.H."/>
            <person name="Dodson R.J."/>
            <person name="Durkin A.S."/>
            <person name="Gwinn M.L."/>
            <person name="Kolonay J.F."/>
            <person name="Nelson W.C."/>
            <person name="Peterson J.D."/>
            <person name="Umayam L.A."/>
            <person name="White O."/>
            <person name="Salzberg S.L."/>
            <person name="Lewis M.R."/>
            <person name="Radune D."/>
            <person name="Holtzapple E.K."/>
            <person name="Khouri H.M."/>
            <person name="Wolf A.M."/>
            <person name="Utterback T.R."/>
            <person name="Hansen C.L."/>
            <person name="McDonald L.A."/>
            <person name="Feldblyum T.V."/>
            <person name="Angiuoli S.V."/>
            <person name="Dickinson T."/>
            <person name="Hickey E.K."/>
            <person name="Holt I.E."/>
            <person name="Loftus B.J."/>
            <person name="Yang F."/>
            <person name="Smith H.O."/>
            <person name="Venter J.C."/>
            <person name="Dougherty B.A."/>
            <person name="Morrison D.A."/>
            <person name="Hollingshead S.K."/>
            <person name="Fraser C.M."/>
        </authorList>
    </citation>
    <scope>NUCLEOTIDE SEQUENCE [LARGE SCALE GENOMIC DNA]</scope>
    <source>
        <strain>ATCC BAA-334 / TIGR4</strain>
    </source>
</reference>
<reference key="2">
    <citation type="submission" date="1995-10" db="EMBL/GenBank/DDBJ databases">
        <authorList>
            <person name="Jin Y.F."/>
            <person name="Everett M.J."/>
            <person name="Piddock L.J.V."/>
        </authorList>
    </citation>
    <scope>NUCLEOTIDE SEQUENCE [GENOMIC DNA] OF 58-120</scope>
    <source>
        <strain>NCTC 7465</strain>
    </source>
</reference>
<reference key="3">
    <citation type="submission" date="1996-02" db="EMBL/GenBank/DDBJ databases">
        <authorList>
            <person name="Tankovic J."/>
            <person name="Perichon B."/>
            <person name="Courvalin P."/>
        </authorList>
    </citation>
    <scope>NUCLEOTIDE SEQUENCE [GENOMIC DNA] OF 40-108</scope>
    <source>
        <strain>BM4203</strain>
    </source>
</reference>
<feature type="chain" id="PRO_0000145262" description="DNA gyrase subunit A">
    <location>
        <begin position="1"/>
        <end position="822"/>
    </location>
</feature>
<feature type="domain" description="Topo IIA-type catalytic" evidence="2">
    <location>
        <begin position="32"/>
        <end position="497"/>
    </location>
</feature>
<feature type="short sequence motif" description="GyrA-box" evidence="1">
    <location>
        <begin position="524"/>
        <end position="530"/>
    </location>
</feature>
<feature type="active site" description="O-(5'-phospho-DNA)-tyrosine intermediate" evidence="1">
    <location>
        <position position="120"/>
    </location>
</feature>
<sequence>MQDKNLVNVNLTKEMKASFIDYAMSVIVARALPDVRDGLKPVHRRILYGMNELGVTPDKPHKKSARITGDVMGKYHPHGDSSIYEAMVRMAQWWSYRYMLVDGHGNFGSMDGDSAAAQRYTEARMSKIALEMLRDINKNTVDFVDNYDANEREPLVLPARFPNLLVNGATGIAVGMATNIPPHNLGETIDAVKLVMDNPEVTTKDLMEVLPGPDFPTGALVMGKSGIHKAYETGKGSIVLRSRTEIETTKTGRERIVVTEFPYMVNKTKVHEHIVRLVQEKRIEGITAVRDESNREGVRFVIEVKRDASANVILNNLFKMTQMQTNFGFNMLAIQNGIPKILSLRQILDAYIEHQKEVVVRRTRFDKEKAEARAHILEGLLIALDHIDEVIRIIRASETDAEAQAELMSKFKLSERQSQAILDMRLRRLTGLERDKIQSEYDDLLALIADLADILAKPERVSQIIKDELDEVKRKFSDKRRTELMIGQVLSLEDEDLIEESDVLITLSNRGYIKRLDQDEFTAQKRGGRGVQGTGVKDDDFVRELVSTSTHDHLLFFTNKGRVYRLKGYEIPEYGRTAKGLPVVNLLKLDEDESIQTVINVESDRSDDAYLFFTTRHGIVKRTSVKEFANIRQNGLKALNLKDEDELINVLLAEGDMDIIIGTKFGYAVRFNQSAVRGMSRIATGVKGVNLREGDTVVGASLITDQDEVLIITEKGYGKRTVATEYPTKGRGGKGMQTAKITEKNGLLAGLMTVQGDEDLMIITDTGVMIRTNLANISQTGRATMGVKVMRLDQDAQIVTFTTVAVAEKEEVGTENETEGEA</sequence>
<comment type="function">
    <text evidence="1">A type II topoisomerase that negatively supercoils closed circular double-stranded (ds) DNA in an ATP-dependent manner to modulate DNA topology and maintain chromosomes in an underwound state. Negative supercoiling favors strand separation, and DNA replication, transcription, recombination and repair, all of which involve strand separation. Also able to catalyze the interconversion of other topological isomers of dsDNA rings, including catenanes and knotted rings. Type II topoisomerases break and join 2 DNA strands simultaneously in an ATP-dependent manner.</text>
</comment>
<comment type="catalytic activity">
    <reaction evidence="1">
        <text>ATP-dependent breakage, passage and rejoining of double-stranded DNA.</text>
        <dbReference type="EC" id="5.6.2.2"/>
    </reaction>
</comment>
<comment type="subunit">
    <text evidence="1">Heterotetramer, composed of two GyrA and two GyrB chains. In the heterotetramer, GyrA contains the active site tyrosine that forms a transient covalent intermediate with DNA, while GyrB binds cofactors and catalyzes ATP hydrolysis.</text>
</comment>
<comment type="subcellular location">
    <subcellularLocation>
        <location evidence="1">Cytoplasm</location>
    </subcellularLocation>
</comment>
<comment type="miscellaneous">
    <text evidence="1">Few gyrases are as efficient as E.coli at forming negative supercoils. Not all organisms have 2 type II topoisomerases; in organisms with a single type II topoisomerase this enzyme also has to decatenate newly replicated chromosomes.</text>
</comment>
<comment type="similarity">
    <text evidence="1">Belongs to the type II topoisomerase GyrA/ParC subunit family.</text>
</comment>
<protein>
    <recommendedName>
        <fullName evidence="1">DNA gyrase subunit A</fullName>
        <ecNumber evidence="1">5.6.2.2</ecNumber>
    </recommendedName>
</protein>
<name>GYRA_STRPN</name>
<gene>
    <name evidence="1" type="primary">gyrA</name>
    <name type="ordered locus">SP_1219</name>
</gene>
<proteinExistence type="inferred from homology"/>
<dbReference type="EC" id="5.6.2.2" evidence="1"/>
<dbReference type="EMBL" id="AE005672">
    <property type="protein sequence ID" value="AAK75325.1"/>
    <property type="molecule type" value="Genomic_DNA"/>
</dbReference>
<dbReference type="EMBL" id="U37560">
    <property type="protein sequence ID" value="AAA79196.1"/>
    <property type="molecule type" value="Genomic_DNA"/>
</dbReference>
<dbReference type="EMBL" id="U49087">
    <property type="protein sequence ID" value="AAB08037.1"/>
    <property type="molecule type" value="Genomic_DNA"/>
</dbReference>
<dbReference type="PIR" id="D95141">
    <property type="entry name" value="D95141"/>
</dbReference>
<dbReference type="RefSeq" id="WP_001152989.1">
    <property type="nucleotide sequence ID" value="NZ_CP155539.1"/>
</dbReference>
<dbReference type="SMR" id="P72524"/>
<dbReference type="ChEMBL" id="CHEMBL2311225"/>
<dbReference type="DrugBank" id="DB06771">
    <property type="generic name" value="Besifloxacin"/>
</dbReference>
<dbReference type="DrugBank" id="DB01044">
    <property type="generic name" value="Gatifloxacin"/>
</dbReference>
<dbReference type="DrugCentral" id="P72524"/>
<dbReference type="PaxDb" id="170187-SP_1219"/>
<dbReference type="EnsemblBacteria" id="AAK75325">
    <property type="protein sequence ID" value="AAK75325"/>
    <property type="gene ID" value="SP_1219"/>
</dbReference>
<dbReference type="KEGG" id="spn:SP_1219"/>
<dbReference type="eggNOG" id="COG0188">
    <property type="taxonomic scope" value="Bacteria"/>
</dbReference>
<dbReference type="PhylomeDB" id="P72524"/>
<dbReference type="BioCyc" id="SPNE170187:G1FZB-1233-MONOMER"/>
<dbReference type="PRO" id="PR:P72524"/>
<dbReference type="Proteomes" id="UP000000585">
    <property type="component" value="Chromosome"/>
</dbReference>
<dbReference type="GO" id="GO:0005694">
    <property type="term" value="C:chromosome"/>
    <property type="evidence" value="ECO:0007669"/>
    <property type="project" value="InterPro"/>
</dbReference>
<dbReference type="GO" id="GO:0005737">
    <property type="term" value="C:cytoplasm"/>
    <property type="evidence" value="ECO:0007669"/>
    <property type="project" value="UniProtKB-SubCell"/>
</dbReference>
<dbReference type="GO" id="GO:0009330">
    <property type="term" value="C:DNA topoisomerase type II (double strand cut, ATP-hydrolyzing) complex"/>
    <property type="evidence" value="ECO:0007669"/>
    <property type="project" value="TreeGrafter"/>
</dbReference>
<dbReference type="GO" id="GO:0005524">
    <property type="term" value="F:ATP binding"/>
    <property type="evidence" value="ECO:0007669"/>
    <property type="project" value="UniProtKB-UniRule"/>
</dbReference>
<dbReference type="GO" id="GO:0003677">
    <property type="term" value="F:DNA binding"/>
    <property type="evidence" value="ECO:0007669"/>
    <property type="project" value="UniProtKB-UniRule"/>
</dbReference>
<dbReference type="GO" id="GO:0034335">
    <property type="term" value="F:DNA negative supercoiling activity"/>
    <property type="evidence" value="ECO:0007669"/>
    <property type="project" value="UniProtKB-ARBA"/>
</dbReference>
<dbReference type="GO" id="GO:0006265">
    <property type="term" value="P:DNA topological change"/>
    <property type="evidence" value="ECO:0007669"/>
    <property type="project" value="UniProtKB-UniRule"/>
</dbReference>
<dbReference type="GO" id="GO:0006261">
    <property type="term" value="P:DNA-templated DNA replication"/>
    <property type="evidence" value="ECO:0007669"/>
    <property type="project" value="UniProtKB-UniRule"/>
</dbReference>
<dbReference type="CDD" id="cd00187">
    <property type="entry name" value="TOP4c"/>
    <property type="match status" value="1"/>
</dbReference>
<dbReference type="FunFam" id="1.10.268.10:FF:000001">
    <property type="entry name" value="DNA gyrase subunit A"/>
    <property type="match status" value="1"/>
</dbReference>
<dbReference type="FunFam" id="2.120.10.90:FF:000004">
    <property type="entry name" value="DNA gyrase subunit A"/>
    <property type="match status" value="1"/>
</dbReference>
<dbReference type="FunFam" id="3.30.1360.40:FF:000002">
    <property type="entry name" value="DNA gyrase subunit A"/>
    <property type="match status" value="1"/>
</dbReference>
<dbReference type="FunFam" id="3.90.199.10:FF:000001">
    <property type="entry name" value="DNA gyrase subunit A"/>
    <property type="match status" value="1"/>
</dbReference>
<dbReference type="Gene3D" id="3.30.1360.40">
    <property type="match status" value="1"/>
</dbReference>
<dbReference type="Gene3D" id="2.120.10.90">
    <property type="entry name" value="DNA gyrase/topoisomerase IV, subunit A, C-terminal"/>
    <property type="match status" value="1"/>
</dbReference>
<dbReference type="Gene3D" id="3.90.199.10">
    <property type="entry name" value="Topoisomerase II, domain 5"/>
    <property type="match status" value="1"/>
</dbReference>
<dbReference type="Gene3D" id="1.10.268.10">
    <property type="entry name" value="Topoisomerase, domain 3"/>
    <property type="match status" value="1"/>
</dbReference>
<dbReference type="HAMAP" id="MF_01897">
    <property type="entry name" value="GyrA"/>
    <property type="match status" value="1"/>
</dbReference>
<dbReference type="InterPro" id="IPR005743">
    <property type="entry name" value="GyrA"/>
</dbReference>
<dbReference type="InterPro" id="IPR006691">
    <property type="entry name" value="GyrA/parC_rep"/>
</dbReference>
<dbReference type="InterPro" id="IPR035516">
    <property type="entry name" value="Gyrase/topoIV_suA_C"/>
</dbReference>
<dbReference type="InterPro" id="IPR013760">
    <property type="entry name" value="Topo_IIA-like_dom_sf"/>
</dbReference>
<dbReference type="InterPro" id="IPR013758">
    <property type="entry name" value="Topo_IIA_A/C_ab"/>
</dbReference>
<dbReference type="InterPro" id="IPR013757">
    <property type="entry name" value="Topo_IIA_A_a_sf"/>
</dbReference>
<dbReference type="InterPro" id="IPR002205">
    <property type="entry name" value="Topo_IIA_dom_A"/>
</dbReference>
<dbReference type="InterPro" id="IPR050220">
    <property type="entry name" value="Type_II_DNA_Topoisomerases"/>
</dbReference>
<dbReference type="NCBIfam" id="TIGR01063">
    <property type="entry name" value="gyrA"/>
    <property type="match status" value="1"/>
</dbReference>
<dbReference type="NCBIfam" id="NF004043">
    <property type="entry name" value="PRK05560.1"/>
    <property type="match status" value="1"/>
</dbReference>
<dbReference type="NCBIfam" id="NF004044">
    <property type="entry name" value="PRK05561.1"/>
    <property type="match status" value="1"/>
</dbReference>
<dbReference type="PANTHER" id="PTHR43493:SF5">
    <property type="entry name" value="DNA GYRASE SUBUNIT A, CHLOROPLASTIC_MITOCHONDRIAL"/>
    <property type="match status" value="1"/>
</dbReference>
<dbReference type="PANTHER" id="PTHR43493">
    <property type="entry name" value="DNA GYRASE/TOPOISOMERASE SUBUNIT A"/>
    <property type="match status" value="1"/>
</dbReference>
<dbReference type="Pfam" id="PF03989">
    <property type="entry name" value="DNA_gyraseA_C"/>
    <property type="match status" value="6"/>
</dbReference>
<dbReference type="Pfam" id="PF00521">
    <property type="entry name" value="DNA_topoisoIV"/>
    <property type="match status" value="1"/>
</dbReference>
<dbReference type="SMART" id="SM00434">
    <property type="entry name" value="TOP4c"/>
    <property type="match status" value="1"/>
</dbReference>
<dbReference type="SUPFAM" id="SSF101904">
    <property type="entry name" value="GyrA/ParC C-terminal domain-like"/>
    <property type="match status" value="1"/>
</dbReference>
<dbReference type="SUPFAM" id="SSF56719">
    <property type="entry name" value="Type II DNA topoisomerase"/>
    <property type="match status" value="1"/>
</dbReference>
<dbReference type="PROSITE" id="PS52040">
    <property type="entry name" value="TOPO_IIA"/>
    <property type="match status" value="1"/>
</dbReference>
<accession>P72524</accession>
<accession>P72536</accession>
<accession>Q54716</accession>
<keyword id="KW-0067">ATP-binding</keyword>
<keyword id="KW-0963">Cytoplasm</keyword>
<keyword id="KW-0238">DNA-binding</keyword>
<keyword id="KW-0413">Isomerase</keyword>
<keyword id="KW-0547">Nucleotide-binding</keyword>
<keyword id="KW-1185">Reference proteome</keyword>
<keyword id="KW-0799">Topoisomerase</keyword>
<organism>
    <name type="scientific">Streptococcus pneumoniae serotype 4 (strain ATCC BAA-334 / TIGR4)</name>
    <dbReference type="NCBI Taxonomy" id="170187"/>
    <lineage>
        <taxon>Bacteria</taxon>
        <taxon>Bacillati</taxon>
        <taxon>Bacillota</taxon>
        <taxon>Bacilli</taxon>
        <taxon>Lactobacillales</taxon>
        <taxon>Streptococcaceae</taxon>
        <taxon>Streptococcus</taxon>
    </lineage>
</organism>